<organism>
    <name type="scientific">Emericella nidulans (strain FGSC A4 / ATCC 38163 / CBS 112.46 / NRRL 194 / M139)</name>
    <name type="common">Aspergillus nidulans</name>
    <dbReference type="NCBI Taxonomy" id="227321"/>
    <lineage>
        <taxon>Eukaryota</taxon>
        <taxon>Fungi</taxon>
        <taxon>Dikarya</taxon>
        <taxon>Ascomycota</taxon>
        <taxon>Pezizomycotina</taxon>
        <taxon>Eurotiomycetes</taxon>
        <taxon>Eurotiomycetidae</taxon>
        <taxon>Eurotiales</taxon>
        <taxon>Aspergillaceae</taxon>
        <taxon>Aspergillus</taxon>
        <taxon>Aspergillus subgen. Nidulantes</taxon>
    </lineage>
</organism>
<proteinExistence type="inferred from homology"/>
<reference key="1">
    <citation type="journal article" date="1997" name="Infect. Immun.">
        <title>Characterization of the Aspergillus nidulans aspnd1 gene demonstrates that the ASPND1 antigen, which it encodes, and several A.fumigatus immunodominant antigens belong to the same family.</title>
        <authorList>
            <person name="Calera J.A."/>
            <person name="Ovejero M.C."/>
            <person name="Lopez-Medrano R."/>
            <person name="Segurado M."/>
            <person name="Puente P."/>
            <person name="Leal F."/>
        </authorList>
    </citation>
    <scope>NUCLEOTIDE SEQUENCE [GENOMIC DNA]</scope>
    <source>
        <strain>G1059</strain>
    </source>
</reference>
<reference key="2">
    <citation type="journal article" date="2005" name="Nature">
        <title>Sequencing of Aspergillus nidulans and comparative analysis with A. fumigatus and A. oryzae.</title>
        <authorList>
            <person name="Galagan J.E."/>
            <person name="Calvo S.E."/>
            <person name="Cuomo C."/>
            <person name="Ma L.-J."/>
            <person name="Wortman J.R."/>
            <person name="Batzoglou S."/>
            <person name="Lee S.-I."/>
            <person name="Bastuerkmen M."/>
            <person name="Spevak C.C."/>
            <person name="Clutterbuck J."/>
            <person name="Kapitonov V."/>
            <person name="Jurka J."/>
            <person name="Scazzocchio C."/>
            <person name="Farman M.L."/>
            <person name="Butler J."/>
            <person name="Purcell S."/>
            <person name="Harris S."/>
            <person name="Braus G.H."/>
            <person name="Draht O."/>
            <person name="Busch S."/>
            <person name="D'Enfert C."/>
            <person name="Bouchier C."/>
            <person name="Goldman G.H."/>
            <person name="Bell-Pedersen D."/>
            <person name="Griffiths-Jones S."/>
            <person name="Doonan J.H."/>
            <person name="Yu J."/>
            <person name="Vienken K."/>
            <person name="Pain A."/>
            <person name="Freitag M."/>
            <person name="Selker E.U."/>
            <person name="Archer D.B."/>
            <person name="Penalva M.A."/>
            <person name="Oakley B.R."/>
            <person name="Momany M."/>
            <person name="Tanaka T."/>
            <person name="Kumagai T."/>
            <person name="Asai K."/>
            <person name="Machida M."/>
            <person name="Nierman W.C."/>
            <person name="Denning D.W."/>
            <person name="Caddick M.X."/>
            <person name="Hynes M."/>
            <person name="Paoletti M."/>
            <person name="Fischer R."/>
            <person name="Miller B.L."/>
            <person name="Dyer P.S."/>
            <person name="Sachs M.S."/>
            <person name="Osmani S.A."/>
            <person name="Birren B.W."/>
        </authorList>
    </citation>
    <scope>NUCLEOTIDE SEQUENCE [LARGE SCALE GENOMIC DNA]</scope>
    <source>
        <strain>FGSC A4 / ATCC 38163 / CBS 112.46 / NRRL 194 / M139</strain>
    </source>
</reference>
<reference key="3">
    <citation type="journal article" date="2009" name="Fungal Genet. Biol.">
        <title>The 2008 update of the Aspergillus nidulans genome annotation: a community effort.</title>
        <authorList>
            <person name="Wortman J.R."/>
            <person name="Gilsenan J.M."/>
            <person name="Joardar V."/>
            <person name="Deegan J."/>
            <person name="Clutterbuck J."/>
            <person name="Andersen M.R."/>
            <person name="Archer D."/>
            <person name="Bencina M."/>
            <person name="Braus G."/>
            <person name="Coutinho P."/>
            <person name="von Dohren H."/>
            <person name="Doonan J."/>
            <person name="Driessen A.J."/>
            <person name="Durek P."/>
            <person name="Espeso E."/>
            <person name="Fekete E."/>
            <person name="Flipphi M."/>
            <person name="Estrada C.G."/>
            <person name="Geysens S."/>
            <person name="Goldman G."/>
            <person name="de Groot P.W."/>
            <person name="Hansen K."/>
            <person name="Harris S.D."/>
            <person name="Heinekamp T."/>
            <person name="Helmstaedt K."/>
            <person name="Henrissat B."/>
            <person name="Hofmann G."/>
            <person name="Homan T."/>
            <person name="Horio T."/>
            <person name="Horiuchi H."/>
            <person name="James S."/>
            <person name="Jones M."/>
            <person name="Karaffa L."/>
            <person name="Karanyi Z."/>
            <person name="Kato M."/>
            <person name="Keller N."/>
            <person name="Kelly D.E."/>
            <person name="Kiel J.A."/>
            <person name="Kim J.M."/>
            <person name="van der Klei I.J."/>
            <person name="Klis F.M."/>
            <person name="Kovalchuk A."/>
            <person name="Krasevec N."/>
            <person name="Kubicek C.P."/>
            <person name="Liu B."/>
            <person name="Maccabe A."/>
            <person name="Meyer V."/>
            <person name="Mirabito P."/>
            <person name="Miskei M."/>
            <person name="Mos M."/>
            <person name="Mullins J."/>
            <person name="Nelson D.R."/>
            <person name="Nielsen J."/>
            <person name="Oakley B.R."/>
            <person name="Osmani S.A."/>
            <person name="Pakula T."/>
            <person name="Paszewski A."/>
            <person name="Paulsen I."/>
            <person name="Pilsyk S."/>
            <person name="Pocsi I."/>
            <person name="Punt P.J."/>
            <person name="Ram A.F."/>
            <person name="Ren Q."/>
            <person name="Robellet X."/>
            <person name="Robson G."/>
            <person name="Seiboth B."/>
            <person name="van Solingen P."/>
            <person name="Specht T."/>
            <person name="Sun J."/>
            <person name="Taheri-Talesh N."/>
            <person name="Takeshita N."/>
            <person name="Ussery D."/>
            <person name="vanKuyk P.A."/>
            <person name="Visser H."/>
            <person name="van de Vondervoort P.J."/>
            <person name="de Vries R.P."/>
            <person name="Walton J."/>
            <person name="Xiang X."/>
            <person name="Xiong Y."/>
            <person name="Zeng A.P."/>
            <person name="Brandt B.W."/>
            <person name="Cornell M.J."/>
            <person name="van den Hondel C.A."/>
            <person name="Visser J."/>
            <person name="Oliver S.G."/>
            <person name="Turner G."/>
        </authorList>
    </citation>
    <scope>GENOME REANNOTATION</scope>
    <source>
        <strain>FGSC A4 / ATCC 38163 / CBS 112.46 / NRRL 194 / M139</strain>
    </source>
</reference>
<accession>Q00746</accession>
<accession>C8VPP3</accession>
<accession>Q5BC98</accession>
<comment type="similarity">
    <text evidence="3">Belongs to the ZPS1 family.</text>
</comment>
<protein>
    <recommendedName>
        <fullName>Antigen 1</fullName>
    </recommendedName>
    <alternativeName>
        <fullName>ASPND1</fullName>
    </alternativeName>
</protein>
<keyword id="KW-0325">Glycoprotein</keyword>
<keyword id="KW-1185">Reference proteome</keyword>
<keyword id="KW-0732">Signal</keyword>
<dbReference type="EMBL" id="Z50175">
    <property type="protein sequence ID" value="CAA90537.1"/>
    <property type="molecule type" value="Genomic_DNA"/>
</dbReference>
<dbReference type="EMBL" id="AACD01000029">
    <property type="protein sequence ID" value="EAA64997.1"/>
    <property type="molecule type" value="Genomic_DNA"/>
</dbReference>
<dbReference type="EMBL" id="BN001307">
    <property type="protein sequence ID" value="CBF85648.1"/>
    <property type="molecule type" value="Genomic_DNA"/>
</dbReference>
<dbReference type="RefSeq" id="XP_659436.1">
    <property type="nucleotide sequence ID" value="XM_654344.1"/>
</dbReference>
<dbReference type="FunCoup" id="Q00746">
    <property type="interactions" value="20"/>
</dbReference>
<dbReference type="STRING" id="227321.Q00746"/>
<dbReference type="GlyCosmos" id="Q00746">
    <property type="glycosylation" value="4 sites, No reported glycans"/>
</dbReference>
<dbReference type="EnsemblFungi" id="CBF85648">
    <property type="protein sequence ID" value="CBF85648"/>
    <property type="gene ID" value="ANIA_01832"/>
</dbReference>
<dbReference type="KEGG" id="ani:ANIA_01832"/>
<dbReference type="VEuPathDB" id="FungiDB:AN1832"/>
<dbReference type="eggNOG" id="ENOG502RTN8">
    <property type="taxonomic scope" value="Eukaryota"/>
</dbReference>
<dbReference type="HOGENOM" id="CLU_048223_0_0_1"/>
<dbReference type="InParanoid" id="Q00746"/>
<dbReference type="OMA" id="CNATQRR"/>
<dbReference type="OrthoDB" id="4689212at2759"/>
<dbReference type="Proteomes" id="UP000000560">
    <property type="component" value="Chromosome VII"/>
</dbReference>
<dbReference type="GO" id="GO:0009986">
    <property type="term" value="C:cell surface"/>
    <property type="evidence" value="ECO:0000318"/>
    <property type="project" value="GO_Central"/>
</dbReference>
<dbReference type="GO" id="GO:0005576">
    <property type="term" value="C:extracellular region"/>
    <property type="evidence" value="ECO:0000318"/>
    <property type="project" value="GO_Central"/>
</dbReference>
<dbReference type="GO" id="GO:0009277">
    <property type="term" value="C:fungal-type cell wall"/>
    <property type="evidence" value="ECO:0000318"/>
    <property type="project" value="GO_Central"/>
</dbReference>
<dbReference type="GO" id="GO:0005178">
    <property type="term" value="F:integrin binding"/>
    <property type="evidence" value="ECO:0000318"/>
    <property type="project" value="GO_Central"/>
</dbReference>
<dbReference type="GO" id="GO:0008237">
    <property type="term" value="F:metallopeptidase activity"/>
    <property type="evidence" value="ECO:0007669"/>
    <property type="project" value="InterPro"/>
</dbReference>
<dbReference type="GO" id="GO:0008270">
    <property type="term" value="F:zinc ion binding"/>
    <property type="evidence" value="ECO:0000318"/>
    <property type="project" value="GO_Central"/>
</dbReference>
<dbReference type="CDD" id="cd11307">
    <property type="entry name" value="M35_Asp_f2_like"/>
    <property type="match status" value="1"/>
</dbReference>
<dbReference type="FunFam" id="3.40.390.10:FF:000043">
    <property type="entry name" value="Major allergen Asp F2"/>
    <property type="match status" value="1"/>
</dbReference>
<dbReference type="Gene3D" id="3.40.390.10">
    <property type="entry name" value="Collagenase (Catalytic Domain)"/>
    <property type="match status" value="1"/>
</dbReference>
<dbReference type="InterPro" id="IPR029482">
    <property type="entry name" value="HRXXH"/>
</dbReference>
<dbReference type="InterPro" id="IPR024079">
    <property type="entry name" value="MetalloPept_cat_dom_sf"/>
</dbReference>
<dbReference type="InterPro" id="IPR039124">
    <property type="entry name" value="PRA1-like"/>
</dbReference>
<dbReference type="PANTHER" id="PTHR39399">
    <property type="entry name" value="PROTEIN ZPS1"/>
    <property type="match status" value="1"/>
</dbReference>
<dbReference type="PANTHER" id="PTHR39399:SF1">
    <property type="entry name" value="PROTEIN ZPS1"/>
    <property type="match status" value="1"/>
</dbReference>
<dbReference type="Pfam" id="PF13933">
    <property type="entry name" value="HRXXH"/>
    <property type="match status" value="1"/>
</dbReference>
<dbReference type="SUPFAM" id="SSF55486">
    <property type="entry name" value="Metalloproteases ('zincins'), catalytic domain"/>
    <property type="match status" value="1"/>
</dbReference>
<feature type="signal peptide" evidence="1">
    <location>
        <begin position="1"/>
        <end position="16"/>
    </location>
</feature>
<feature type="chain" id="PRO_0000041749" description="Antigen 1">
    <location>
        <begin position="17"/>
        <end position="277"/>
    </location>
</feature>
<feature type="region of interest" description="Disordered" evidence="2">
    <location>
        <begin position="230"/>
        <end position="277"/>
    </location>
</feature>
<feature type="compositionally biased region" description="Acidic residues" evidence="2">
    <location>
        <begin position="233"/>
        <end position="263"/>
    </location>
</feature>
<feature type="compositionally biased region" description="Basic and acidic residues" evidence="2">
    <location>
        <begin position="264"/>
        <end position="277"/>
    </location>
</feature>
<feature type="glycosylation site" description="N-linked (GlcNAc...) asparagine" evidence="1">
    <location>
        <position position="41"/>
    </location>
</feature>
<feature type="glycosylation site" description="N-linked (GlcNAc...) asparagine" evidence="1">
    <location>
        <position position="71"/>
    </location>
</feature>
<feature type="glycosylation site" description="N-linked (GlcNAc...) asparagine" evidence="1">
    <location>
        <position position="127"/>
    </location>
</feature>
<feature type="glycosylation site" description="N-linked (GlcNAc...) asparagine" evidence="1">
    <location>
        <position position="200"/>
    </location>
</feature>
<evidence type="ECO:0000255" key="1"/>
<evidence type="ECO:0000256" key="2">
    <source>
        <dbReference type="SAM" id="MobiDB-lite"/>
    </source>
</evidence>
<evidence type="ECO:0000305" key="3"/>
<sequence length="277" mass="30595">MQLLALTLALCASIAALPTQQTPLPLEDPIKSPFPIHHSCNATEQRQLATALQETVTLAEHAKDHILRWGNESAIYRKYFGDRPSLTAIGAYDIIVNGNPDNILFRCDNPDGNCALEGWGGHWRGENASDETVICELSYTTRRSLSTMCSQGYTISEWETNTFWAGDLLHRLYHMPAIGQGLVEHYADGYEGVLELAEGNRTEAVHDSETLQYFALEVYAYDVAVPGIGCVGGEEENDGQGEEQTEEPAQDDQQDEAAEEEIPENCHTHEGGELHCT</sequence>
<gene>
    <name type="primary">aspnd1</name>
    <name type="ORF">AN1832</name>
</gene>
<name>ANG1_EMENI</name>